<feature type="chain" id="PRO_0000151265" description="UPF0285 protein MTH_1441">
    <location>
        <begin position="1"/>
        <end position="333"/>
    </location>
</feature>
<proteinExistence type="inferred from homology"/>
<reference key="1">
    <citation type="journal article" date="1997" name="J. Bacteriol.">
        <title>Complete genome sequence of Methanobacterium thermoautotrophicum deltaH: functional analysis and comparative genomics.</title>
        <authorList>
            <person name="Smith D.R."/>
            <person name="Doucette-Stamm L.A."/>
            <person name="Deloughery C."/>
            <person name="Lee H.-M."/>
            <person name="Dubois J."/>
            <person name="Aldredge T."/>
            <person name="Bashirzadeh R."/>
            <person name="Blakely D."/>
            <person name="Cook R."/>
            <person name="Gilbert K."/>
            <person name="Harrison D."/>
            <person name="Hoang L."/>
            <person name="Keagle P."/>
            <person name="Lumm W."/>
            <person name="Pothier B."/>
            <person name="Qiu D."/>
            <person name="Spadafora R."/>
            <person name="Vicare R."/>
            <person name="Wang Y."/>
            <person name="Wierzbowski J."/>
            <person name="Gibson R."/>
            <person name="Jiwani N."/>
            <person name="Caruso A."/>
            <person name="Bush D."/>
            <person name="Safer H."/>
            <person name="Patwell D."/>
            <person name="Prabhakar S."/>
            <person name="McDougall S."/>
            <person name="Shimer G."/>
            <person name="Goyal A."/>
            <person name="Pietrovski S."/>
            <person name="Church G.M."/>
            <person name="Daniels C.J."/>
            <person name="Mao J.-I."/>
            <person name="Rice P."/>
            <person name="Noelling J."/>
            <person name="Reeve J.N."/>
        </authorList>
    </citation>
    <scope>NUCLEOTIDE SEQUENCE [LARGE SCALE GENOMIC DNA]</scope>
    <source>
        <strain>ATCC 29096 / DSM 1053 / JCM 10044 / NBRC 100330 / Delta H</strain>
    </source>
</reference>
<organism>
    <name type="scientific">Methanothermobacter thermautotrophicus (strain ATCC 29096 / DSM 1053 / JCM 10044 / NBRC 100330 / Delta H)</name>
    <name type="common">Methanobacterium thermoautotrophicum</name>
    <dbReference type="NCBI Taxonomy" id="187420"/>
    <lineage>
        <taxon>Archaea</taxon>
        <taxon>Methanobacteriati</taxon>
        <taxon>Methanobacteriota</taxon>
        <taxon>Methanomada group</taxon>
        <taxon>Methanobacteria</taxon>
        <taxon>Methanobacteriales</taxon>
        <taxon>Methanobacteriaceae</taxon>
        <taxon>Methanothermobacter</taxon>
    </lineage>
</organism>
<gene>
    <name type="ordered locus">MTH_1441</name>
</gene>
<keyword id="KW-1185">Reference proteome</keyword>
<name>Y1441_METTH</name>
<sequence>MVGLVFVGMDHGTTGVSFTILGDDAEHFKIGREDLSTGRASALDELKDRVPLNEIDLMAITYAMGDAISTIKPIERVKNRGIISIGGAGKVTGGGTAVYSEIESSGIPTLLIPGLHRNTPCLDERFRAAYSHHASPEKVSICYNAYLETGWENMIVSDISSNTVTMLIQDGRIVGAMDACVGAMGVIHGPLDLEMLRKIDDGEKTANECFSHAGAVKIAGIDTKVSRAREELLEMYRAGRDEARLALDTMMMTIAMEIWGLAGISSGIDGIVLTGSVGAMREPYDFHGKLKDMVKEIADVRCTDSHLRLHGKCQIARDIYNGKREILGIEVEV</sequence>
<dbReference type="EMBL" id="AE000666">
    <property type="protein sequence ID" value="AAB85916.1"/>
    <property type="molecule type" value="Genomic_DNA"/>
</dbReference>
<dbReference type="PIR" id="H69058">
    <property type="entry name" value="H69058"/>
</dbReference>
<dbReference type="FunCoup" id="O27490">
    <property type="interactions" value="1"/>
</dbReference>
<dbReference type="STRING" id="187420.MTH_1441"/>
<dbReference type="PaxDb" id="187420-MTH_1441"/>
<dbReference type="EnsemblBacteria" id="AAB85916">
    <property type="protein sequence ID" value="AAB85916"/>
    <property type="gene ID" value="MTH_1441"/>
</dbReference>
<dbReference type="KEGG" id="mth:MTH_1441"/>
<dbReference type="PATRIC" id="fig|187420.15.peg.1403"/>
<dbReference type="HOGENOM" id="CLU_846254_0_0_2"/>
<dbReference type="InParanoid" id="O27490"/>
<dbReference type="Proteomes" id="UP000005223">
    <property type="component" value="Chromosome"/>
</dbReference>
<dbReference type="Gene3D" id="3.30.420.40">
    <property type="match status" value="1"/>
</dbReference>
<dbReference type="HAMAP" id="MF_01087">
    <property type="entry name" value="UPF0285"/>
    <property type="match status" value="1"/>
</dbReference>
<dbReference type="InterPro" id="IPR043129">
    <property type="entry name" value="ATPase_NBD"/>
</dbReference>
<dbReference type="InterPro" id="IPR016735">
    <property type="entry name" value="Methan_mark_12"/>
</dbReference>
<dbReference type="NCBIfam" id="TIGR03281">
    <property type="entry name" value="methan_mark_12"/>
    <property type="match status" value="1"/>
</dbReference>
<dbReference type="PIRSF" id="PIRSF018783">
    <property type="entry name" value="UCP018783"/>
    <property type="match status" value="1"/>
</dbReference>
<dbReference type="SUPFAM" id="SSF53067">
    <property type="entry name" value="Actin-like ATPase domain"/>
    <property type="match status" value="1"/>
</dbReference>
<evidence type="ECO:0000255" key="1">
    <source>
        <dbReference type="HAMAP-Rule" id="MF_01087"/>
    </source>
</evidence>
<accession>O27490</accession>
<comment type="similarity">
    <text evidence="1">Belongs to the UPF0285 family.</text>
</comment>
<protein>
    <recommendedName>
        <fullName evidence="1">UPF0285 protein MTH_1441</fullName>
    </recommendedName>
</protein>